<evidence type="ECO:0000255" key="1">
    <source>
        <dbReference type="HAMAP-Rule" id="MF_01529"/>
    </source>
</evidence>
<feature type="chain" id="PRO_1000215396" description="Multidrug resistance protein MdtH">
    <location>
        <begin position="1"/>
        <end position="402"/>
    </location>
</feature>
<feature type="topological domain" description="Cytoplasmic" evidence="1">
    <location>
        <begin position="1"/>
        <end position="12"/>
    </location>
</feature>
<feature type="transmembrane region" description="Helical" evidence="1">
    <location>
        <begin position="13"/>
        <end position="33"/>
    </location>
</feature>
<feature type="topological domain" description="Periplasmic" evidence="1">
    <location>
        <begin position="34"/>
        <end position="98"/>
    </location>
</feature>
<feature type="transmembrane region" description="Helical" evidence="1">
    <location>
        <begin position="99"/>
        <end position="116"/>
    </location>
</feature>
<feature type="topological domain" description="Cytoplasmic" evidence="1">
    <location>
        <begin position="117"/>
        <end position="138"/>
    </location>
</feature>
<feature type="transmembrane region" description="Helical" evidence="1">
    <location>
        <begin position="139"/>
        <end position="159"/>
    </location>
</feature>
<feature type="topological domain" description="Periplasmic" evidence="1">
    <location>
        <begin position="160"/>
        <end position="164"/>
    </location>
</feature>
<feature type="transmembrane region" description="Helical" evidence="1">
    <location>
        <begin position="165"/>
        <end position="185"/>
    </location>
</feature>
<feature type="topological domain" description="Cytoplasmic" evidence="1">
    <location>
        <begin position="186"/>
        <end position="213"/>
    </location>
</feature>
<feature type="transmembrane region" description="Helical" evidence="1">
    <location>
        <begin position="214"/>
        <end position="234"/>
    </location>
</feature>
<feature type="topological domain" description="Periplasmic" evidence="1">
    <location>
        <begin position="235"/>
        <end position="243"/>
    </location>
</feature>
<feature type="transmembrane region" description="Helical" evidence="1">
    <location>
        <begin position="244"/>
        <end position="264"/>
    </location>
</feature>
<feature type="topological domain" description="Cytoplasmic" evidence="1">
    <location>
        <begin position="265"/>
        <end position="276"/>
    </location>
</feature>
<feature type="transmembrane region" description="Helical" evidence="1">
    <location>
        <begin position="277"/>
        <end position="297"/>
    </location>
</feature>
<feature type="topological domain" description="Periplasmic" evidence="1">
    <location>
        <begin position="298"/>
        <end position="299"/>
    </location>
</feature>
<feature type="transmembrane region" description="Helical" evidence="1">
    <location>
        <begin position="300"/>
        <end position="320"/>
    </location>
</feature>
<feature type="topological domain" description="Cytoplasmic" evidence="1">
    <location>
        <begin position="321"/>
        <end position="339"/>
    </location>
</feature>
<feature type="transmembrane region" description="Helical" evidence="1">
    <location>
        <begin position="340"/>
        <end position="360"/>
    </location>
</feature>
<feature type="topological domain" description="Periplasmic" evidence="1">
    <location>
        <begin position="361"/>
        <end position="367"/>
    </location>
</feature>
<feature type="transmembrane region" description="Helical" evidence="1">
    <location>
        <begin position="368"/>
        <end position="388"/>
    </location>
</feature>
<feature type="topological domain" description="Cytoplasmic" evidence="1">
    <location>
        <begin position="389"/>
        <end position="402"/>
    </location>
</feature>
<accession>C4ZS05</accession>
<reference key="1">
    <citation type="journal article" date="2009" name="J. Bacteriol.">
        <title>Genomic sequencing reveals regulatory mutations and recombinational events in the widely used MC4100 lineage of Escherichia coli K-12.</title>
        <authorList>
            <person name="Ferenci T."/>
            <person name="Zhou Z."/>
            <person name="Betteridge T."/>
            <person name="Ren Y."/>
            <person name="Liu Y."/>
            <person name="Feng L."/>
            <person name="Reeves P.R."/>
            <person name="Wang L."/>
        </authorList>
    </citation>
    <scope>NUCLEOTIDE SEQUENCE [LARGE SCALE GENOMIC DNA]</scope>
    <source>
        <strain>K12 / MC4100 / BW2952</strain>
    </source>
</reference>
<sequence>MSRVSQARNLGKYFLLIDNMLVVLGFFVVFPLISIRFVDQMGWAAVMVGIALGLRQFIQQGLGIFGGAIADRFGAKPMIVTGMLMRAAGFATMGIAHEPWLLWFSCLLSGLGGTLFDPPRSALVVKLIRPQQRGRFFSLLMMQDSAGAVIGALLGSWLLQYDFRLVCATGAVLFVLCAAFNAWLLPAWKLSTVRTPVREGMTRVMRDKRFVTYVLTLAGYYMLAVQVMLMLPIMVNDVAGAPSAVKWMYAIEACLSLTLLYPIARWSEKHFRLEHRLMAGLLIMSLSMMPVGMVSGLQQLFTLICLFYIGSIIAEPARETLSASLADARARGSYMGFSRLGLAIGGAIGYIGGGWLFDLGKSAHQPELPWMMLGIIGIFTFLALGWQFSQKRAARRLLERDA</sequence>
<name>MDTH_ECOBW</name>
<proteinExistence type="inferred from homology"/>
<organism>
    <name type="scientific">Escherichia coli (strain K12 / MC4100 / BW2952)</name>
    <dbReference type="NCBI Taxonomy" id="595496"/>
    <lineage>
        <taxon>Bacteria</taxon>
        <taxon>Pseudomonadati</taxon>
        <taxon>Pseudomonadota</taxon>
        <taxon>Gammaproteobacteria</taxon>
        <taxon>Enterobacterales</taxon>
        <taxon>Enterobacteriaceae</taxon>
        <taxon>Escherichia</taxon>
    </lineage>
</organism>
<protein>
    <recommendedName>
        <fullName evidence="1">Multidrug resistance protein MdtH</fullName>
    </recommendedName>
</protein>
<keyword id="KW-0046">Antibiotic resistance</keyword>
<keyword id="KW-0997">Cell inner membrane</keyword>
<keyword id="KW-1003">Cell membrane</keyword>
<keyword id="KW-0472">Membrane</keyword>
<keyword id="KW-0812">Transmembrane</keyword>
<keyword id="KW-1133">Transmembrane helix</keyword>
<keyword id="KW-0813">Transport</keyword>
<comment type="function">
    <text evidence="1">Confers resistance to norfloxacin and enoxacin.</text>
</comment>
<comment type="subcellular location">
    <subcellularLocation>
        <location evidence="1">Cell inner membrane</location>
        <topology evidence="1">Multi-pass membrane protein</topology>
    </subcellularLocation>
</comment>
<comment type="similarity">
    <text evidence="1">Belongs to the major facilitator superfamily. DHA1 family. MdtH (TC 2.A.1.2.21) subfamily.</text>
</comment>
<dbReference type="EMBL" id="CP001396">
    <property type="protein sequence ID" value="ACR64336.1"/>
    <property type="molecule type" value="Genomic_DNA"/>
</dbReference>
<dbReference type="RefSeq" id="WP_000092206.1">
    <property type="nucleotide sequence ID" value="NC_012759.1"/>
</dbReference>
<dbReference type="SMR" id="C4ZS05"/>
<dbReference type="GeneID" id="75203652"/>
<dbReference type="KEGG" id="ebw:BWG_0913"/>
<dbReference type="HOGENOM" id="CLU_001265_60_2_6"/>
<dbReference type="GO" id="GO:0005886">
    <property type="term" value="C:plasma membrane"/>
    <property type="evidence" value="ECO:0007669"/>
    <property type="project" value="UniProtKB-SubCell"/>
</dbReference>
<dbReference type="GO" id="GO:0022857">
    <property type="term" value="F:transmembrane transporter activity"/>
    <property type="evidence" value="ECO:0007669"/>
    <property type="project" value="UniProtKB-UniRule"/>
</dbReference>
<dbReference type="GO" id="GO:0046677">
    <property type="term" value="P:response to antibiotic"/>
    <property type="evidence" value="ECO:0007669"/>
    <property type="project" value="UniProtKB-KW"/>
</dbReference>
<dbReference type="CDD" id="cd17329">
    <property type="entry name" value="MFS_MdtH_MDR_like"/>
    <property type="match status" value="1"/>
</dbReference>
<dbReference type="FunFam" id="1.20.1250.20:FF:000039">
    <property type="entry name" value="Multidrug resistance protein MdtH"/>
    <property type="match status" value="1"/>
</dbReference>
<dbReference type="Gene3D" id="1.20.1250.20">
    <property type="entry name" value="MFS general substrate transporter like domains"/>
    <property type="match status" value="1"/>
</dbReference>
<dbReference type="HAMAP" id="MF_01529">
    <property type="entry name" value="MFS_MdtH"/>
    <property type="match status" value="1"/>
</dbReference>
<dbReference type="InterPro" id="IPR011701">
    <property type="entry name" value="MFS"/>
</dbReference>
<dbReference type="InterPro" id="IPR020846">
    <property type="entry name" value="MFS_dom"/>
</dbReference>
<dbReference type="InterPro" id="IPR036259">
    <property type="entry name" value="MFS_trans_sf"/>
</dbReference>
<dbReference type="InterPro" id="IPR050171">
    <property type="entry name" value="MFS_Transporters"/>
</dbReference>
<dbReference type="InterPro" id="IPR022855">
    <property type="entry name" value="Multidrug-R_MdtH"/>
</dbReference>
<dbReference type="NCBIfam" id="NF008650">
    <property type="entry name" value="PRK11646.1"/>
    <property type="match status" value="1"/>
</dbReference>
<dbReference type="PANTHER" id="PTHR23517:SF2">
    <property type="entry name" value="MULTIDRUG RESISTANCE PROTEIN MDTH"/>
    <property type="match status" value="1"/>
</dbReference>
<dbReference type="PANTHER" id="PTHR23517">
    <property type="entry name" value="RESISTANCE PROTEIN MDTM, PUTATIVE-RELATED-RELATED"/>
    <property type="match status" value="1"/>
</dbReference>
<dbReference type="Pfam" id="PF07690">
    <property type="entry name" value="MFS_1"/>
    <property type="match status" value="1"/>
</dbReference>
<dbReference type="SUPFAM" id="SSF103473">
    <property type="entry name" value="MFS general substrate transporter"/>
    <property type="match status" value="1"/>
</dbReference>
<dbReference type="PROSITE" id="PS50850">
    <property type="entry name" value="MFS"/>
    <property type="match status" value="1"/>
</dbReference>
<gene>
    <name evidence="1" type="primary">mdtH</name>
    <name type="ordered locus">BWG_0913</name>
</gene>